<organism>
    <name type="scientific">Frog virus 3 (isolate Goorha)</name>
    <name type="common">FV-3</name>
    <dbReference type="NCBI Taxonomy" id="654924"/>
    <lineage>
        <taxon>Viruses</taxon>
        <taxon>Varidnaviria</taxon>
        <taxon>Bamfordvirae</taxon>
        <taxon>Nucleocytoviricota</taxon>
        <taxon>Megaviricetes</taxon>
        <taxon>Pimascovirales</taxon>
        <taxon>Iridoviridae</taxon>
        <taxon>Alphairidovirinae</taxon>
        <taxon>Ranavirus</taxon>
        <taxon>Frog virus 3</taxon>
    </lineage>
</organism>
<gene>
    <name type="ORF">FV3-093L</name>
</gene>
<keyword id="KW-1185">Reference proteome</keyword>
<reference key="1">
    <citation type="journal article" date="2004" name="Virology">
        <title>Comparative genomic analyses of frog virus 3, type species of the genus Ranavirus (family Iridoviridae).</title>
        <authorList>
            <person name="Tan W.G."/>
            <person name="Barkman T.J."/>
            <person name="Gregory Chinchar V."/>
            <person name="Essani K."/>
        </authorList>
    </citation>
    <scope>NUCLEOTIDE SEQUENCE [LARGE SCALE GENOMIC DNA]</scope>
</reference>
<evidence type="ECO:0000256" key="1">
    <source>
        <dbReference type="SAM" id="MobiDB-lite"/>
    </source>
</evidence>
<sequence>MDKPTVETSAAPVETLVLTEPPAETQAEDSVSSVLAGLTAAIETVDRLRTAFGAE</sequence>
<proteinExistence type="predicted"/>
<organismHost>
    <name type="scientific">Dryophytes versicolor</name>
    <name type="common">chameleon treefrog</name>
    <dbReference type="NCBI Taxonomy" id="30343"/>
</organismHost>
<organismHost>
    <name type="scientific">Lithobates pipiens</name>
    <name type="common">Northern leopard frog</name>
    <name type="synonym">Rana pipiens</name>
    <dbReference type="NCBI Taxonomy" id="8404"/>
</organismHost>
<organismHost>
    <name type="scientific">Lithobates sylvaticus</name>
    <name type="common">Wood frog</name>
    <name type="synonym">Rana sylvatica</name>
    <dbReference type="NCBI Taxonomy" id="45438"/>
</organismHost>
<organismHost>
    <name type="scientific">Notophthalmus viridescens</name>
    <name type="common">Eastern newt</name>
    <name type="synonym">Triturus viridescens</name>
    <dbReference type="NCBI Taxonomy" id="8316"/>
</organismHost>
<name>093L_FRG3G</name>
<feature type="chain" id="PRO_0000410546" description="Uncharacterized protein 093L">
    <location>
        <begin position="1"/>
        <end position="55"/>
    </location>
</feature>
<feature type="region of interest" description="Disordered" evidence="1">
    <location>
        <begin position="1"/>
        <end position="30"/>
    </location>
</feature>
<protein>
    <recommendedName>
        <fullName>Uncharacterized protein 093L</fullName>
    </recommendedName>
</protein>
<accession>Q6GZN2</accession>
<dbReference type="EMBL" id="AY548484">
    <property type="protein sequence ID" value="AAT09753.1"/>
    <property type="molecule type" value="Genomic_DNA"/>
</dbReference>
<dbReference type="RefSeq" id="YP_031672.1">
    <property type="nucleotide sequence ID" value="NC_005946.1"/>
</dbReference>
<dbReference type="SMR" id="Q6GZN2"/>
<dbReference type="KEGG" id="vg:2947812"/>
<dbReference type="Proteomes" id="UP000008770">
    <property type="component" value="Segment"/>
</dbReference>